<organism>
    <name type="scientific">Dehalococcoides mccartyi (strain ATCC BAA-2100 / JCM 16839 / KCTC 5957 / BAV1)</name>
    <dbReference type="NCBI Taxonomy" id="216389"/>
    <lineage>
        <taxon>Bacteria</taxon>
        <taxon>Bacillati</taxon>
        <taxon>Chloroflexota</taxon>
        <taxon>Dehalococcoidia</taxon>
        <taxon>Dehalococcoidales</taxon>
        <taxon>Dehalococcoidaceae</taxon>
        <taxon>Dehalococcoides</taxon>
    </lineage>
</organism>
<proteinExistence type="inferred from homology"/>
<keyword id="KW-0066">ATP synthesis</keyword>
<keyword id="KW-0067">ATP-binding</keyword>
<keyword id="KW-1003">Cell membrane</keyword>
<keyword id="KW-0139">CF(1)</keyword>
<keyword id="KW-0375">Hydrogen ion transport</keyword>
<keyword id="KW-0406">Ion transport</keyword>
<keyword id="KW-0472">Membrane</keyword>
<keyword id="KW-0547">Nucleotide-binding</keyword>
<keyword id="KW-1278">Translocase</keyword>
<keyword id="KW-0813">Transport</keyword>
<protein>
    <recommendedName>
        <fullName evidence="1">ATP synthase subunit alpha</fullName>
        <ecNumber evidence="1">7.1.2.2</ecNumber>
    </recommendedName>
    <alternativeName>
        <fullName evidence="1">ATP synthase F1 sector subunit alpha</fullName>
    </alternativeName>
    <alternativeName>
        <fullName evidence="1">F-ATPase subunit alpha</fullName>
    </alternativeName>
</protein>
<dbReference type="EC" id="7.1.2.2" evidence="1"/>
<dbReference type="EMBL" id="CP000688">
    <property type="protein sequence ID" value="ABQ17121.1"/>
    <property type="molecule type" value="Genomic_DNA"/>
</dbReference>
<dbReference type="SMR" id="A5FRQ3"/>
<dbReference type="KEGG" id="deb:DehaBAV1_0536"/>
<dbReference type="PATRIC" id="fig|216389.18.peg.581"/>
<dbReference type="HOGENOM" id="CLU_010091_2_1_0"/>
<dbReference type="GO" id="GO:0005886">
    <property type="term" value="C:plasma membrane"/>
    <property type="evidence" value="ECO:0007669"/>
    <property type="project" value="UniProtKB-SubCell"/>
</dbReference>
<dbReference type="GO" id="GO:0045259">
    <property type="term" value="C:proton-transporting ATP synthase complex"/>
    <property type="evidence" value="ECO:0007669"/>
    <property type="project" value="UniProtKB-KW"/>
</dbReference>
<dbReference type="GO" id="GO:0043531">
    <property type="term" value="F:ADP binding"/>
    <property type="evidence" value="ECO:0007669"/>
    <property type="project" value="TreeGrafter"/>
</dbReference>
<dbReference type="GO" id="GO:0005524">
    <property type="term" value="F:ATP binding"/>
    <property type="evidence" value="ECO:0007669"/>
    <property type="project" value="UniProtKB-UniRule"/>
</dbReference>
<dbReference type="GO" id="GO:0046933">
    <property type="term" value="F:proton-transporting ATP synthase activity, rotational mechanism"/>
    <property type="evidence" value="ECO:0007669"/>
    <property type="project" value="UniProtKB-UniRule"/>
</dbReference>
<dbReference type="CDD" id="cd18113">
    <property type="entry name" value="ATP-synt_F1_alpha_C"/>
    <property type="match status" value="1"/>
</dbReference>
<dbReference type="CDD" id="cd18116">
    <property type="entry name" value="ATP-synt_F1_alpha_N"/>
    <property type="match status" value="1"/>
</dbReference>
<dbReference type="CDD" id="cd01132">
    <property type="entry name" value="F1-ATPase_alpha_CD"/>
    <property type="match status" value="1"/>
</dbReference>
<dbReference type="FunFam" id="1.20.150.20:FF:000001">
    <property type="entry name" value="ATP synthase subunit alpha"/>
    <property type="match status" value="1"/>
</dbReference>
<dbReference type="FunFam" id="2.40.30.20:FF:000001">
    <property type="entry name" value="ATP synthase subunit alpha"/>
    <property type="match status" value="1"/>
</dbReference>
<dbReference type="FunFam" id="3.40.50.300:FF:000002">
    <property type="entry name" value="ATP synthase subunit alpha"/>
    <property type="match status" value="1"/>
</dbReference>
<dbReference type="Gene3D" id="2.40.30.20">
    <property type="match status" value="1"/>
</dbReference>
<dbReference type="Gene3D" id="1.20.150.20">
    <property type="entry name" value="ATP synthase alpha/beta chain, C-terminal domain"/>
    <property type="match status" value="1"/>
</dbReference>
<dbReference type="Gene3D" id="3.40.50.300">
    <property type="entry name" value="P-loop containing nucleotide triphosphate hydrolases"/>
    <property type="match status" value="1"/>
</dbReference>
<dbReference type="HAMAP" id="MF_01346">
    <property type="entry name" value="ATP_synth_alpha_bact"/>
    <property type="match status" value="1"/>
</dbReference>
<dbReference type="InterPro" id="IPR023366">
    <property type="entry name" value="ATP_synth_asu-like_sf"/>
</dbReference>
<dbReference type="InterPro" id="IPR000793">
    <property type="entry name" value="ATP_synth_asu_C"/>
</dbReference>
<dbReference type="InterPro" id="IPR038376">
    <property type="entry name" value="ATP_synth_asu_C_sf"/>
</dbReference>
<dbReference type="InterPro" id="IPR033732">
    <property type="entry name" value="ATP_synth_F1_a_nt-bd_dom"/>
</dbReference>
<dbReference type="InterPro" id="IPR005294">
    <property type="entry name" value="ATP_synth_F1_asu"/>
</dbReference>
<dbReference type="InterPro" id="IPR020003">
    <property type="entry name" value="ATPase_a/bsu_AS"/>
</dbReference>
<dbReference type="InterPro" id="IPR004100">
    <property type="entry name" value="ATPase_F1/V1/A1_a/bsu_N"/>
</dbReference>
<dbReference type="InterPro" id="IPR036121">
    <property type="entry name" value="ATPase_F1/V1/A1_a/bsu_N_sf"/>
</dbReference>
<dbReference type="InterPro" id="IPR000194">
    <property type="entry name" value="ATPase_F1/V1/A1_a/bsu_nucl-bd"/>
</dbReference>
<dbReference type="InterPro" id="IPR027417">
    <property type="entry name" value="P-loop_NTPase"/>
</dbReference>
<dbReference type="NCBIfam" id="TIGR00962">
    <property type="entry name" value="atpA"/>
    <property type="match status" value="1"/>
</dbReference>
<dbReference type="NCBIfam" id="NF009884">
    <property type="entry name" value="PRK13343.1"/>
    <property type="match status" value="1"/>
</dbReference>
<dbReference type="PANTHER" id="PTHR48082">
    <property type="entry name" value="ATP SYNTHASE SUBUNIT ALPHA, MITOCHONDRIAL"/>
    <property type="match status" value="1"/>
</dbReference>
<dbReference type="PANTHER" id="PTHR48082:SF2">
    <property type="entry name" value="ATP SYNTHASE SUBUNIT ALPHA, MITOCHONDRIAL"/>
    <property type="match status" value="1"/>
</dbReference>
<dbReference type="Pfam" id="PF00006">
    <property type="entry name" value="ATP-synt_ab"/>
    <property type="match status" value="1"/>
</dbReference>
<dbReference type="Pfam" id="PF00306">
    <property type="entry name" value="ATP-synt_ab_C"/>
    <property type="match status" value="1"/>
</dbReference>
<dbReference type="Pfam" id="PF02874">
    <property type="entry name" value="ATP-synt_ab_N"/>
    <property type="match status" value="1"/>
</dbReference>
<dbReference type="PIRSF" id="PIRSF039088">
    <property type="entry name" value="F_ATPase_subunit_alpha"/>
    <property type="match status" value="1"/>
</dbReference>
<dbReference type="SUPFAM" id="SSF47917">
    <property type="entry name" value="C-terminal domain of alpha and beta subunits of F1 ATP synthase"/>
    <property type="match status" value="1"/>
</dbReference>
<dbReference type="SUPFAM" id="SSF50615">
    <property type="entry name" value="N-terminal domain of alpha and beta subunits of F1 ATP synthase"/>
    <property type="match status" value="1"/>
</dbReference>
<dbReference type="SUPFAM" id="SSF52540">
    <property type="entry name" value="P-loop containing nucleoside triphosphate hydrolases"/>
    <property type="match status" value="1"/>
</dbReference>
<dbReference type="PROSITE" id="PS00152">
    <property type="entry name" value="ATPASE_ALPHA_BETA"/>
    <property type="match status" value="1"/>
</dbReference>
<evidence type="ECO:0000255" key="1">
    <source>
        <dbReference type="HAMAP-Rule" id="MF_01346"/>
    </source>
</evidence>
<accession>A5FRQ3</accession>
<gene>
    <name evidence="1" type="primary">atpA</name>
    <name type="ordered locus">DehaBAV1_0536</name>
</gene>
<feature type="chain" id="PRO_1000086875" description="ATP synthase subunit alpha">
    <location>
        <begin position="1"/>
        <end position="503"/>
    </location>
</feature>
<feature type="binding site" evidence="1">
    <location>
        <begin position="169"/>
        <end position="176"/>
    </location>
    <ligand>
        <name>ATP</name>
        <dbReference type="ChEBI" id="CHEBI:30616"/>
    </ligand>
</feature>
<feature type="site" description="Required for activity" evidence="1">
    <location>
        <position position="362"/>
    </location>
</feature>
<sequence length="503" mass="54093">MSARGQDIVSIIKEQIKEFGAPVSMTSVGSVIEVGDGIARIHGLSNAKYNELLEFPGGVLGIALNLEEDSVAAVILGEDSNIKEGDEVKATGRISEITVGKGMIGRVVDPLGRPLDGKGPIKAESTRPLERIAPNVVDRKSVNTPVQTGIKAIDAMIPIGRGQRELIIGDRSTGKTAIALDTIINQKGGDLVCIYVAIGQKASKVARIVALLEQYGAMEHTIVVAANSSDAVALQYLAPYAGCAIGEEFMEQGKDALVVYDDLTKHAWAYRQLSLLLRRPPGREAYPGDLFYLHSRLLERAARLNDKLGGGSLTALPIIETQAGDVSAYVPTNVISITDGQIYLEPDMFNAGIRPAVNVGISVSRVGSSAQTKAMKKVAGKLKMDMGQYRELAAFAQFGTSELDKSTRMQLERGQRVTEVLKQGQYQPVPAAKQVAILYATLNGYLDNIEVGKVRDYESGLYRFLEANFASVLTAIAKENVISADTEKTLKTALDEYKKGLVV</sequence>
<name>ATPA_DEHMB</name>
<reference key="1">
    <citation type="submission" date="2007-05" db="EMBL/GenBank/DDBJ databases">
        <title>Complete sequence of Dehalococcoides sp. BAV1.</title>
        <authorList>
            <consortium name="US DOE Joint Genome Institute"/>
            <person name="Copeland A."/>
            <person name="Lucas S."/>
            <person name="Lapidus A."/>
            <person name="Barry K."/>
            <person name="Detter J.C."/>
            <person name="Glavina del Rio T."/>
            <person name="Hammon N."/>
            <person name="Israni S."/>
            <person name="Pitluck S."/>
            <person name="Lowry S."/>
            <person name="Clum A."/>
            <person name="Schmutz J."/>
            <person name="Larimer F."/>
            <person name="Land M."/>
            <person name="Hauser L."/>
            <person name="Kyrpides N."/>
            <person name="Kim E."/>
            <person name="Ritalahti K.M."/>
            <person name="Loeffler F."/>
            <person name="Richardson P."/>
        </authorList>
    </citation>
    <scope>NUCLEOTIDE SEQUENCE [LARGE SCALE GENOMIC DNA]</scope>
    <source>
        <strain>ATCC BAA-2100 / JCM 16839 / KCTC 5957 / BAV1</strain>
    </source>
</reference>
<comment type="function">
    <text evidence="1">Produces ATP from ADP in the presence of a proton gradient across the membrane. The alpha chain is a regulatory subunit.</text>
</comment>
<comment type="catalytic activity">
    <reaction evidence="1">
        <text>ATP + H2O + 4 H(+)(in) = ADP + phosphate + 5 H(+)(out)</text>
        <dbReference type="Rhea" id="RHEA:57720"/>
        <dbReference type="ChEBI" id="CHEBI:15377"/>
        <dbReference type="ChEBI" id="CHEBI:15378"/>
        <dbReference type="ChEBI" id="CHEBI:30616"/>
        <dbReference type="ChEBI" id="CHEBI:43474"/>
        <dbReference type="ChEBI" id="CHEBI:456216"/>
        <dbReference type="EC" id="7.1.2.2"/>
    </reaction>
</comment>
<comment type="subunit">
    <text evidence="1">F-type ATPases have 2 components, CF(1) - the catalytic core - and CF(0) - the membrane proton channel. CF(1) has five subunits: alpha(3), beta(3), gamma(1), delta(1), epsilon(1). CF(0) has three main subunits: a(1), b(2) and c(9-12). The alpha and beta chains form an alternating ring which encloses part of the gamma chain. CF(1) is attached to CF(0) by a central stalk formed by the gamma and epsilon chains, while a peripheral stalk is formed by the delta and b chains.</text>
</comment>
<comment type="subcellular location">
    <subcellularLocation>
        <location evidence="1">Cell membrane</location>
        <topology evidence="1">Peripheral membrane protein</topology>
    </subcellularLocation>
</comment>
<comment type="similarity">
    <text evidence="1">Belongs to the ATPase alpha/beta chains family.</text>
</comment>